<sequence>MMELRVLLLLLLLTLLGAMGSLCLANSDTQAKGAHSNNMTIKTFRIFDDSESEFEEIPWDELDESGEGSGDQAPVSRSARKPIRRNITKEAEQYLSSQWLTKFVPSLYTVVFIVGLPLNLLAIIIFLFKMKVRKPAVVYMLNLAIADVFFVSVLPFKIAYHLSGNDWLFGPGMCRIVTAIFYCNMYCSVLLIASISVDRFLAVVYPMHSLSWRTMSRAYMACSFIWLISIASTIPLLVTEQTQKIPRLDITTCHDVLDLKDLKDFYIYYFSSFCLLFFFVPFIITTICYIGIIRSLSSSSIENSCKKTRALFLAVVVLCVFIICFGPTNVLFLTHYLQEANEFLYFAYILSACVGSVSCCLDPLIYYYASSQCQRYLYSLLCCRKVSEPGSSTGQLMSTAMKNDNCSTNAKSSIYKKLLA</sequence>
<evidence type="ECO:0000250" key="1">
    <source>
        <dbReference type="UniProtKB" id="P25116"/>
    </source>
</evidence>
<evidence type="ECO:0000250" key="2">
    <source>
        <dbReference type="UniProtKB" id="P26824"/>
    </source>
</evidence>
<evidence type="ECO:0000255" key="3"/>
<evidence type="ECO:0000255" key="4">
    <source>
        <dbReference type="PROSITE-ProRule" id="PRU00521"/>
    </source>
</evidence>
<evidence type="ECO:0000256" key="5">
    <source>
        <dbReference type="SAM" id="MobiDB-lite"/>
    </source>
</evidence>
<evidence type="ECO:0000269" key="6">
    <source>
    </source>
</evidence>
<protein>
    <recommendedName>
        <fullName evidence="1">Proteinase-activated receptor 1</fullName>
        <shortName>PAR-1</shortName>
    </recommendedName>
    <alternativeName>
        <fullName>Thrombin receptor</fullName>
    </alternativeName>
</protein>
<keyword id="KW-0094">Blood coagulation</keyword>
<keyword id="KW-1003">Cell membrane</keyword>
<keyword id="KW-1015">Disulfide bond</keyword>
<keyword id="KW-0297">G-protein coupled receptor</keyword>
<keyword id="KW-0325">Glycoprotein</keyword>
<keyword id="KW-0356">Hemostasis</keyword>
<keyword id="KW-0472">Membrane</keyword>
<keyword id="KW-0675">Receptor</keyword>
<keyword id="KW-1185">Reference proteome</keyword>
<keyword id="KW-0732">Signal</keyword>
<keyword id="KW-0807">Transducer</keyword>
<keyword id="KW-0812">Transmembrane</keyword>
<keyword id="KW-1133">Transmembrane helix</keyword>
<proteinExistence type="evidence at protein level"/>
<reference key="1">
    <citation type="journal article" date="1994" name="Nature">
        <title>Specificity of the thrombin receptor for agonist peptide is defined by its extracellular surface.</title>
        <authorList>
            <person name="Gerszten R.E."/>
            <person name="Chen J."/>
            <person name="Ishii M."/>
            <person name="Ishii K."/>
            <person name="Nanevicz T."/>
            <person name="Turck C.W."/>
            <person name="Vu T.-K.H."/>
            <person name="Coughlin S.R."/>
        </authorList>
    </citation>
    <scope>NUCLEOTIDE SEQUENCE [MRNA]</scope>
    <scope>PROTEOLYTIC CLEAVAGE</scope>
    <scope>MUTAGENESIS OF LYS-42</scope>
</reference>
<comment type="function">
    <text evidence="2">High affinity receptor that binds the activated thrombin, leading to calcium release from intracellular stores. The thrombin-activated receptor signaling pathway is mediated through PTX-insensitive G proteins, activation of phospholipase C resulting in the production of 1D-myo-inositol 1,4,5-trisphosphate (InsP3) which binds to InsP3 receptors causing calcium release from the stores.</text>
</comment>
<comment type="subcellular location">
    <subcellularLocation>
        <location evidence="2">Cell membrane</location>
        <topology evidence="2">Multi-pass membrane protein</topology>
    </subcellularLocation>
</comment>
<comment type="PTM">
    <text evidence="6">Proteolytic cleavage generates a new N-terminus that functions as a tethered ligand.</text>
</comment>
<comment type="similarity">
    <text evidence="4">Belongs to the G-protein coupled receptor 1 family.</text>
</comment>
<accession>P47749</accession>
<gene>
    <name evidence="1" type="primary">f2r</name>
</gene>
<feature type="signal peptide" evidence="3">
    <location>
        <begin position="1"/>
        <end position="20"/>
    </location>
</feature>
<feature type="propeptide" id="PRO_0000012748" description="Removed for receptor activation">
    <location>
        <begin position="21"/>
        <end position="42"/>
    </location>
</feature>
<feature type="chain" id="PRO_0000012749" description="Proteinase-activated receptor 1">
    <location>
        <begin position="43"/>
        <end position="420"/>
    </location>
</feature>
<feature type="topological domain" description="Extracellular" evidence="3">
    <location>
        <begin position="43"/>
        <end position="101"/>
    </location>
</feature>
<feature type="transmembrane region" description="Helical; Name=1" evidence="3">
    <location>
        <begin position="102"/>
        <end position="127"/>
    </location>
</feature>
<feature type="topological domain" description="Cytoplasmic" evidence="3">
    <location>
        <begin position="128"/>
        <end position="136"/>
    </location>
</feature>
<feature type="transmembrane region" description="Helical; Name=2" evidence="3">
    <location>
        <begin position="137"/>
        <end position="156"/>
    </location>
</feature>
<feature type="topological domain" description="Extracellular" evidence="3">
    <location>
        <begin position="157"/>
        <end position="175"/>
    </location>
</feature>
<feature type="transmembrane region" description="Helical; Name=3" evidence="3">
    <location>
        <begin position="176"/>
        <end position="197"/>
    </location>
</feature>
<feature type="topological domain" description="Cytoplasmic" evidence="3">
    <location>
        <begin position="198"/>
        <end position="217"/>
    </location>
</feature>
<feature type="transmembrane region" description="Helical; Name=4" evidence="3">
    <location>
        <begin position="218"/>
        <end position="238"/>
    </location>
</feature>
<feature type="topological domain" description="Extracellular" evidence="3">
    <location>
        <begin position="239"/>
        <end position="267"/>
    </location>
</feature>
<feature type="transmembrane region" description="Helical; Name=5" evidence="3">
    <location>
        <begin position="268"/>
        <end position="287"/>
    </location>
</feature>
<feature type="topological domain" description="Cytoplasmic" evidence="3">
    <location>
        <begin position="288"/>
        <end position="310"/>
    </location>
</feature>
<feature type="transmembrane region" description="Helical; Name=6" evidence="3">
    <location>
        <begin position="311"/>
        <end position="333"/>
    </location>
</feature>
<feature type="topological domain" description="Extracellular" evidence="3">
    <location>
        <begin position="334"/>
        <end position="345"/>
    </location>
</feature>
<feature type="transmembrane region" description="Helical; Name=7" evidence="3">
    <location>
        <begin position="346"/>
        <end position="369"/>
    </location>
</feature>
<feature type="topological domain" description="Cytoplasmic" evidence="3">
    <location>
        <begin position="370"/>
        <end position="420"/>
    </location>
</feature>
<feature type="region of interest" description="Disordered" evidence="5">
    <location>
        <begin position="61"/>
        <end position="80"/>
    </location>
</feature>
<feature type="site" description="Cleavage; by thrombin" evidence="6">
    <location>
        <begin position="42"/>
        <end position="43"/>
    </location>
</feature>
<feature type="glycosylation site" description="N-linked (GlcNAc...) asparagine" evidence="3">
    <location>
        <position position="38"/>
    </location>
</feature>
<feature type="glycosylation site" description="N-linked (GlcNAc...) asparagine" evidence="3">
    <location>
        <position position="86"/>
    </location>
</feature>
<feature type="disulfide bond" evidence="4">
    <location>
        <begin position="174"/>
        <end position="253"/>
    </location>
</feature>
<feature type="mutagenesis site" description="Lack of activation by thrombin.">
    <original>K</original>
    <variation>A</variation>
    <location>
        <position position="42"/>
    </location>
</feature>
<dbReference type="EMBL" id="U09632">
    <property type="protein sequence ID" value="AAA18498.1"/>
    <property type="molecule type" value="mRNA"/>
</dbReference>
<dbReference type="PIR" id="I51667">
    <property type="entry name" value="I51667"/>
</dbReference>
<dbReference type="RefSeq" id="NP_001079252.1">
    <property type="nucleotide sequence ID" value="NM_001085783.1"/>
</dbReference>
<dbReference type="SMR" id="P47749"/>
<dbReference type="GlyCosmos" id="P47749">
    <property type="glycosylation" value="2 sites, No reported glycans"/>
</dbReference>
<dbReference type="GeneID" id="378526"/>
<dbReference type="KEGG" id="xla:378526"/>
<dbReference type="AGR" id="Xenbase:XB-GENE-985800"/>
<dbReference type="CTD" id="378526"/>
<dbReference type="Xenbase" id="XB-GENE-985800">
    <property type="gene designation" value="f2r.L"/>
</dbReference>
<dbReference type="OrthoDB" id="8881832at2759"/>
<dbReference type="Proteomes" id="UP000186698">
    <property type="component" value="Chromosome 1L"/>
</dbReference>
<dbReference type="Bgee" id="378526">
    <property type="expression patterns" value="Expressed in heart and 10 other cell types or tissues"/>
</dbReference>
<dbReference type="GO" id="GO:0005886">
    <property type="term" value="C:plasma membrane"/>
    <property type="evidence" value="ECO:0000250"/>
    <property type="project" value="UniProtKB"/>
</dbReference>
<dbReference type="GO" id="GO:0015057">
    <property type="term" value="F:thrombin-activated receptor activity"/>
    <property type="evidence" value="ECO:0000318"/>
    <property type="project" value="GO_Central"/>
</dbReference>
<dbReference type="GO" id="GO:0007596">
    <property type="term" value="P:blood coagulation"/>
    <property type="evidence" value="ECO:0007669"/>
    <property type="project" value="UniProtKB-KW"/>
</dbReference>
<dbReference type="GO" id="GO:0007200">
    <property type="term" value="P:phospholipase C-activating G protein-coupled receptor signaling pathway"/>
    <property type="evidence" value="ECO:0000318"/>
    <property type="project" value="GO_Central"/>
</dbReference>
<dbReference type="GO" id="GO:0030194">
    <property type="term" value="P:positive regulation of blood coagulation"/>
    <property type="evidence" value="ECO:0000318"/>
    <property type="project" value="GO_Central"/>
</dbReference>
<dbReference type="GO" id="GO:0035025">
    <property type="term" value="P:positive regulation of Rho protein signal transduction"/>
    <property type="evidence" value="ECO:0007669"/>
    <property type="project" value="TreeGrafter"/>
</dbReference>
<dbReference type="GO" id="GO:0048167">
    <property type="term" value="P:regulation of synaptic plasticity"/>
    <property type="evidence" value="ECO:0000250"/>
    <property type="project" value="UniProtKB"/>
</dbReference>
<dbReference type="CDD" id="cd15369">
    <property type="entry name" value="7tmA_PAR1"/>
    <property type="match status" value="1"/>
</dbReference>
<dbReference type="FunFam" id="1.20.1070.10:FF:000040">
    <property type="entry name" value="Coagulation factor 2 (thrombin) receptor"/>
    <property type="match status" value="1"/>
</dbReference>
<dbReference type="Gene3D" id="1.20.1070.10">
    <property type="entry name" value="Rhodopsin 7-helix transmembrane proteins"/>
    <property type="match status" value="1"/>
</dbReference>
<dbReference type="InterPro" id="IPR000276">
    <property type="entry name" value="GPCR_Rhodpsn"/>
</dbReference>
<dbReference type="InterPro" id="IPR017452">
    <property type="entry name" value="GPCR_Rhodpsn_7TM"/>
</dbReference>
<dbReference type="InterPro" id="IPR003912">
    <property type="entry name" value="Protea_act_rcpt"/>
</dbReference>
<dbReference type="InterPro" id="IPR000935">
    <property type="entry name" value="Thrmbn_rcpt"/>
</dbReference>
<dbReference type="PANTHER" id="PTHR24232">
    <property type="entry name" value="G-PROTEIN COUPLED RECEPTOR"/>
    <property type="match status" value="1"/>
</dbReference>
<dbReference type="PANTHER" id="PTHR24232:SF20">
    <property type="entry name" value="PROTEINASE-ACTIVATED RECEPTOR 1"/>
    <property type="match status" value="1"/>
</dbReference>
<dbReference type="Pfam" id="PF00001">
    <property type="entry name" value="7tm_1"/>
    <property type="match status" value="1"/>
</dbReference>
<dbReference type="PRINTS" id="PR00237">
    <property type="entry name" value="GPCRRHODOPSN"/>
</dbReference>
<dbReference type="PRINTS" id="PR01428">
    <property type="entry name" value="PROTEASEAR"/>
</dbReference>
<dbReference type="PRINTS" id="PR00908">
    <property type="entry name" value="THROMBINR"/>
</dbReference>
<dbReference type="SUPFAM" id="SSF81321">
    <property type="entry name" value="Family A G protein-coupled receptor-like"/>
    <property type="match status" value="1"/>
</dbReference>
<dbReference type="PROSITE" id="PS00237">
    <property type="entry name" value="G_PROTEIN_RECEP_F1_1"/>
    <property type="match status" value="1"/>
</dbReference>
<dbReference type="PROSITE" id="PS50262">
    <property type="entry name" value="G_PROTEIN_RECEP_F1_2"/>
    <property type="match status" value="1"/>
</dbReference>
<name>PAR1_XENLA</name>
<organism>
    <name type="scientific">Xenopus laevis</name>
    <name type="common">African clawed frog</name>
    <dbReference type="NCBI Taxonomy" id="8355"/>
    <lineage>
        <taxon>Eukaryota</taxon>
        <taxon>Metazoa</taxon>
        <taxon>Chordata</taxon>
        <taxon>Craniata</taxon>
        <taxon>Vertebrata</taxon>
        <taxon>Euteleostomi</taxon>
        <taxon>Amphibia</taxon>
        <taxon>Batrachia</taxon>
        <taxon>Anura</taxon>
        <taxon>Pipoidea</taxon>
        <taxon>Pipidae</taxon>
        <taxon>Xenopodinae</taxon>
        <taxon>Xenopus</taxon>
        <taxon>Xenopus</taxon>
    </lineage>
</organism>